<comment type="function">
    <text evidence="1">This protein is one of the early assembly proteins of the 50S ribosomal subunit, although it is not seen to bind rRNA by itself. It is important during the early stages of 50S assembly.</text>
</comment>
<comment type="subunit">
    <text evidence="1">Part of the 50S ribosomal subunit.</text>
</comment>
<comment type="similarity">
    <text evidence="1">Belongs to the universal ribosomal protein uL13 family.</text>
</comment>
<dbReference type="EMBL" id="CP000232">
    <property type="protein sequence ID" value="ABC20707.1"/>
    <property type="molecule type" value="Genomic_DNA"/>
</dbReference>
<dbReference type="RefSeq" id="YP_431250.1">
    <property type="nucleotide sequence ID" value="NC_007644.1"/>
</dbReference>
<dbReference type="SMR" id="Q2RFT2"/>
<dbReference type="STRING" id="264732.Moth_2425"/>
<dbReference type="EnsemblBacteria" id="ABC20707">
    <property type="protein sequence ID" value="ABC20707"/>
    <property type="gene ID" value="Moth_2425"/>
</dbReference>
<dbReference type="KEGG" id="mta:Moth_2425"/>
<dbReference type="PATRIC" id="fig|264732.11.peg.2643"/>
<dbReference type="eggNOG" id="COG0102">
    <property type="taxonomic scope" value="Bacteria"/>
</dbReference>
<dbReference type="HOGENOM" id="CLU_082184_2_2_9"/>
<dbReference type="OrthoDB" id="9801330at2"/>
<dbReference type="GO" id="GO:0022625">
    <property type="term" value="C:cytosolic large ribosomal subunit"/>
    <property type="evidence" value="ECO:0007669"/>
    <property type="project" value="TreeGrafter"/>
</dbReference>
<dbReference type="GO" id="GO:0003729">
    <property type="term" value="F:mRNA binding"/>
    <property type="evidence" value="ECO:0007669"/>
    <property type="project" value="TreeGrafter"/>
</dbReference>
<dbReference type="GO" id="GO:0003735">
    <property type="term" value="F:structural constituent of ribosome"/>
    <property type="evidence" value="ECO:0007669"/>
    <property type="project" value="InterPro"/>
</dbReference>
<dbReference type="GO" id="GO:0017148">
    <property type="term" value="P:negative regulation of translation"/>
    <property type="evidence" value="ECO:0007669"/>
    <property type="project" value="TreeGrafter"/>
</dbReference>
<dbReference type="GO" id="GO:0006412">
    <property type="term" value="P:translation"/>
    <property type="evidence" value="ECO:0007669"/>
    <property type="project" value="UniProtKB-UniRule"/>
</dbReference>
<dbReference type="CDD" id="cd00392">
    <property type="entry name" value="Ribosomal_L13"/>
    <property type="match status" value="1"/>
</dbReference>
<dbReference type="FunFam" id="3.90.1180.10:FF:000001">
    <property type="entry name" value="50S ribosomal protein L13"/>
    <property type="match status" value="1"/>
</dbReference>
<dbReference type="Gene3D" id="3.90.1180.10">
    <property type="entry name" value="Ribosomal protein L13"/>
    <property type="match status" value="1"/>
</dbReference>
<dbReference type="HAMAP" id="MF_01366">
    <property type="entry name" value="Ribosomal_uL13"/>
    <property type="match status" value="1"/>
</dbReference>
<dbReference type="InterPro" id="IPR005822">
    <property type="entry name" value="Ribosomal_uL13"/>
</dbReference>
<dbReference type="InterPro" id="IPR005823">
    <property type="entry name" value="Ribosomal_uL13_bac-type"/>
</dbReference>
<dbReference type="InterPro" id="IPR023563">
    <property type="entry name" value="Ribosomal_uL13_CS"/>
</dbReference>
<dbReference type="InterPro" id="IPR036899">
    <property type="entry name" value="Ribosomal_uL13_sf"/>
</dbReference>
<dbReference type="NCBIfam" id="TIGR01066">
    <property type="entry name" value="rplM_bact"/>
    <property type="match status" value="1"/>
</dbReference>
<dbReference type="PANTHER" id="PTHR11545:SF2">
    <property type="entry name" value="LARGE RIBOSOMAL SUBUNIT PROTEIN UL13M"/>
    <property type="match status" value="1"/>
</dbReference>
<dbReference type="PANTHER" id="PTHR11545">
    <property type="entry name" value="RIBOSOMAL PROTEIN L13"/>
    <property type="match status" value="1"/>
</dbReference>
<dbReference type="Pfam" id="PF00572">
    <property type="entry name" value="Ribosomal_L13"/>
    <property type="match status" value="1"/>
</dbReference>
<dbReference type="PIRSF" id="PIRSF002181">
    <property type="entry name" value="Ribosomal_L13"/>
    <property type="match status" value="1"/>
</dbReference>
<dbReference type="SUPFAM" id="SSF52161">
    <property type="entry name" value="Ribosomal protein L13"/>
    <property type="match status" value="1"/>
</dbReference>
<dbReference type="PROSITE" id="PS00783">
    <property type="entry name" value="RIBOSOMAL_L13"/>
    <property type="match status" value="1"/>
</dbReference>
<organism>
    <name type="scientific">Moorella thermoacetica (strain ATCC 39073 / JCM 9320)</name>
    <dbReference type="NCBI Taxonomy" id="264732"/>
    <lineage>
        <taxon>Bacteria</taxon>
        <taxon>Bacillati</taxon>
        <taxon>Bacillota</taxon>
        <taxon>Clostridia</taxon>
        <taxon>Moorellales</taxon>
        <taxon>Moorellaceae</taxon>
        <taxon>Moorella</taxon>
    </lineage>
</organism>
<proteinExistence type="inferred from homology"/>
<reference key="1">
    <citation type="journal article" date="2008" name="Environ. Microbiol.">
        <title>The complete genome sequence of Moorella thermoacetica (f. Clostridium thermoaceticum).</title>
        <authorList>
            <person name="Pierce E."/>
            <person name="Xie G."/>
            <person name="Barabote R.D."/>
            <person name="Saunders E."/>
            <person name="Han C.S."/>
            <person name="Detter J.C."/>
            <person name="Richardson P."/>
            <person name="Brettin T.S."/>
            <person name="Das A."/>
            <person name="Ljungdahl L.G."/>
            <person name="Ragsdale S.W."/>
        </authorList>
    </citation>
    <scope>NUCLEOTIDE SEQUENCE [LARGE SCALE GENOMIC DNA]</scope>
    <source>
        <strain>ATCC 39073 / JCM 9320</strain>
    </source>
</reference>
<gene>
    <name evidence="1" type="primary">rplM</name>
    <name type="ordered locus">Moth_2425</name>
</gene>
<sequence length="144" mass="16369">MSTFMAKPHEVERKWYVIDAAGKTLGRVATEAARLLRGKHKPIFTPHVDTGDYVIIINAAKVRLTGNKLQKKQYIRHTGYPGGLRVMNYATLLRTFPERAVEKAVKGMIPHNSLGRKMVKKLKVYRGDSHPHAAQQPQVWEIKD</sequence>
<keyword id="KW-0687">Ribonucleoprotein</keyword>
<keyword id="KW-0689">Ribosomal protein</keyword>
<name>RL13_MOOTA</name>
<protein>
    <recommendedName>
        <fullName evidence="1">Large ribosomal subunit protein uL13</fullName>
    </recommendedName>
    <alternativeName>
        <fullName evidence="2">50S ribosomal protein L13</fullName>
    </alternativeName>
</protein>
<accession>Q2RFT2</accession>
<evidence type="ECO:0000255" key="1">
    <source>
        <dbReference type="HAMAP-Rule" id="MF_01366"/>
    </source>
</evidence>
<evidence type="ECO:0000305" key="2"/>
<feature type="chain" id="PRO_0000261751" description="Large ribosomal subunit protein uL13">
    <location>
        <begin position="1"/>
        <end position="144"/>
    </location>
</feature>